<name>MALL_HUMAN</name>
<gene>
    <name type="primary">MALL</name>
    <name type="synonym">BENE</name>
</gene>
<accession>Q13021</accession>
<accession>B3KWR6</accession>
<accession>Q9BTU0</accession>
<feature type="chain" id="PRO_0000156811" description="MAL-like protein">
    <location>
        <begin position="1"/>
        <end position="153"/>
    </location>
</feature>
<feature type="transmembrane region" description="Helical" evidence="1">
    <location>
        <begin position="22"/>
        <end position="42"/>
    </location>
</feature>
<feature type="transmembrane region" description="Helical" evidence="1">
    <location>
        <begin position="59"/>
        <end position="79"/>
    </location>
</feature>
<feature type="transmembrane region" description="Helical" evidence="1">
    <location>
        <begin position="97"/>
        <end position="117"/>
    </location>
</feature>
<feature type="transmembrane region" description="Helical" evidence="1">
    <location>
        <begin position="131"/>
        <end position="151"/>
    </location>
</feature>
<feature type="domain" description="MARVEL" evidence="2">
    <location>
        <begin position="22"/>
        <end position="153"/>
    </location>
</feature>
<keyword id="KW-0472">Membrane</keyword>
<keyword id="KW-1267">Proteomics identification</keyword>
<keyword id="KW-1185">Reference proteome</keyword>
<keyword id="KW-0812">Transmembrane</keyword>
<keyword id="KW-1133">Transmembrane helix</keyword>
<proteinExistence type="evidence at protein level"/>
<organism>
    <name type="scientific">Homo sapiens</name>
    <name type="common">Human</name>
    <dbReference type="NCBI Taxonomy" id="9606"/>
    <lineage>
        <taxon>Eukaryota</taxon>
        <taxon>Metazoa</taxon>
        <taxon>Chordata</taxon>
        <taxon>Craniata</taxon>
        <taxon>Vertebrata</taxon>
        <taxon>Euteleostomi</taxon>
        <taxon>Mammalia</taxon>
        <taxon>Eutheria</taxon>
        <taxon>Euarchontoglires</taxon>
        <taxon>Primates</taxon>
        <taxon>Haplorrhini</taxon>
        <taxon>Catarrhini</taxon>
        <taxon>Hominidae</taxon>
        <taxon>Homo</taxon>
    </lineage>
</organism>
<comment type="interaction">
    <interactant intactId="EBI-750078">
        <id>Q13021</id>
    </interactant>
    <interactant intactId="EBI-19125216">
        <id>Q86WK6</id>
        <label>AMIGO1</label>
    </interactant>
    <organismsDiffer>false</organismsDiffer>
    <experiments>3</experiments>
</comment>
<comment type="interaction">
    <interactant intactId="EBI-750078">
        <id>Q13021</id>
    </interactant>
    <interactant intactId="EBI-13059134">
        <id>Q13520</id>
        <label>AQP6</label>
    </interactant>
    <organismsDiffer>false</organismsDiffer>
    <experiments>3</experiments>
</comment>
<comment type="interaction">
    <interactant intactId="EBI-750078">
        <id>Q13021</id>
    </interactant>
    <interactant intactId="EBI-11343438">
        <id>Q3SXY8</id>
        <label>ARL13B</label>
    </interactant>
    <organismsDiffer>false</organismsDiffer>
    <experiments>3</experiments>
</comment>
<comment type="interaction">
    <interactant intactId="EBI-750078">
        <id>Q13021</id>
    </interactant>
    <interactant intactId="EBI-2606700">
        <id>P18859</id>
        <label>ATP5PF</label>
    </interactant>
    <organismsDiffer>false</organismsDiffer>
    <experiments>3</experiments>
</comment>
<comment type="interaction">
    <interactant intactId="EBI-750078">
        <id>Q13021</id>
    </interactant>
    <interactant intactId="EBI-19947314">
        <id>Q8NFU1</id>
        <label>BEST2</label>
    </interactant>
    <organismsDiffer>false</organismsDiffer>
    <experiments>3</experiments>
</comment>
<comment type="interaction">
    <interactant intactId="EBI-750078">
        <id>Q13021</id>
    </interactant>
    <interactant intactId="EBI-749464">
        <id>Q12983</id>
        <label>BNIP3</label>
    </interactant>
    <organismsDiffer>false</organismsDiffer>
    <experiments>3</experiments>
</comment>
<comment type="interaction">
    <interactant intactId="EBI-750078">
        <id>Q13021</id>
    </interactant>
    <interactant intactId="EBI-849893">
        <id>O60238</id>
        <label>BNIP3L</label>
    </interactant>
    <organismsDiffer>false</organismsDiffer>
    <experiments>3</experiments>
</comment>
<comment type="interaction">
    <interactant intactId="EBI-750078">
        <id>Q13021</id>
    </interactant>
    <interactant intactId="EBI-2874789">
        <id>O95415</id>
        <label>BRI3</label>
    </interactant>
    <organismsDiffer>false</organismsDiffer>
    <experiments>3</experiments>
</comment>
<comment type="interaction">
    <interactant intactId="EBI-750078">
        <id>Q13021</id>
    </interactant>
    <interactant intactId="EBI-11532900">
        <id>J3KQ12</id>
        <label>BSCL2</label>
    </interactant>
    <organismsDiffer>false</organismsDiffer>
    <experiments>3</experiments>
</comment>
<comment type="interaction">
    <interactant intactId="EBI-750078">
        <id>Q13021</id>
    </interactant>
    <interactant intactId="EBI-7797864">
        <id>P11912</id>
        <label>CD79A</label>
    </interactant>
    <organismsDiffer>false</organismsDiffer>
    <experiments>3</experiments>
</comment>
<comment type="interaction">
    <interactant intactId="EBI-750078">
        <id>Q13021</id>
    </interactant>
    <interactant intactId="EBI-740744">
        <id>O95471</id>
        <label>CLDN7</label>
    </interactant>
    <organismsDiffer>false</organismsDiffer>
    <experiments>3</experiments>
</comment>
<comment type="interaction">
    <interactant intactId="EBI-750078">
        <id>Q13021</id>
    </interactant>
    <interactant intactId="EBI-18341636">
        <id>O95484</id>
        <label>CLDN9</label>
    </interactant>
    <organismsDiffer>false</organismsDiffer>
    <experiments>3</experiments>
</comment>
<comment type="interaction">
    <interactant intactId="EBI-750078">
        <id>Q13021</id>
    </interactant>
    <interactant intactId="EBI-2873246">
        <id>Q8IUN9</id>
        <label>CLEC10A</label>
    </interactant>
    <organismsDiffer>false</organismsDiffer>
    <experiments>3</experiments>
</comment>
<comment type="interaction">
    <interactant intactId="EBI-750078">
        <id>Q13021</id>
    </interactant>
    <interactant intactId="EBI-12811991">
        <id>Q2HXU8-2</id>
        <label>CLEC12B</label>
    </interactant>
    <organismsDiffer>false</organismsDiffer>
    <experiments>3</experiments>
</comment>
<comment type="interaction">
    <interactant intactId="EBI-750078">
        <id>Q13021</id>
    </interactant>
    <interactant intactId="EBI-17710733">
        <id>Q86T13</id>
        <label>CLEC14A</label>
    </interactant>
    <organismsDiffer>false</organismsDiffer>
    <experiments>3</experiments>
</comment>
<comment type="interaction">
    <interactant intactId="EBI-750078">
        <id>Q13021</id>
    </interactant>
    <interactant intactId="EBI-18013275">
        <id>Q7Z7G2</id>
        <label>CPLX4</label>
    </interactant>
    <organismsDiffer>false</organismsDiffer>
    <experiments>3</experiments>
</comment>
<comment type="interaction">
    <interactant intactId="EBI-750078">
        <id>Q13021</id>
    </interactant>
    <interactant intactId="EBI-6942903">
        <id>Q96BA8</id>
        <label>CREB3L1</label>
    </interactant>
    <organismsDiffer>false</organismsDiffer>
    <experiments>3</experiments>
</comment>
<comment type="interaction">
    <interactant intactId="EBI-750078">
        <id>Q13021</id>
    </interactant>
    <interactant intactId="EBI-23865243">
        <id>Q13324-2</id>
        <label>CRHR2</label>
    </interactant>
    <organismsDiffer>false</organismsDiffer>
    <experiments>3</experiments>
</comment>
<comment type="interaction">
    <interactant intactId="EBI-750078">
        <id>Q13021</id>
    </interactant>
    <interactant intactId="EBI-1030991">
        <id>P16410</id>
        <label>CTLA4</label>
    </interactant>
    <organismsDiffer>false</organismsDiffer>
    <experiments>3</experiments>
</comment>
<comment type="interaction">
    <interactant intactId="EBI-750078">
        <id>Q13021</id>
    </interactant>
    <interactant intactId="EBI-12808806">
        <id>Q9Y4D2</id>
        <label>DAGLA</label>
    </interactant>
    <organismsDiffer>false</organismsDiffer>
    <experiments>3</experiments>
</comment>
<comment type="interaction">
    <interactant intactId="EBI-750078">
        <id>Q13021</id>
    </interactant>
    <interactant intactId="EBI-12135455">
        <id>Q96PD2-2</id>
        <label>DCBLD2</label>
    </interactant>
    <organismsDiffer>false</organismsDiffer>
    <experiments>3</experiments>
</comment>
<comment type="interaction">
    <interactant intactId="EBI-750078">
        <id>Q13021</id>
    </interactant>
    <interactant intactId="EBI-17206972">
        <id>Q9NXB9</id>
        <label>ELOVL2</label>
    </interactant>
    <organismsDiffer>false</organismsDiffer>
    <experiments>3</experiments>
</comment>
<comment type="interaction">
    <interactant intactId="EBI-750078">
        <id>Q13021</id>
    </interactant>
    <interactant intactId="EBI-18535450">
        <id>Q9GZR5</id>
        <label>ELOVL4</label>
    </interactant>
    <organismsDiffer>false</organismsDiffer>
    <experiments>3</experiments>
</comment>
<comment type="interaction">
    <interactant intactId="EBI-750078">
        <id>Q13021</id>
    </interactant>
    <interactant intactId="EBI-4319440">
        <id>P54849</id>
        <label>EMP1</label>
    </interactant>
    <organismsDiffer>false</organismsDiffer>
    <experiments>3</experiments>
</comment>
<comment type="interaction">
    <interactant intactId="EBI-750078">
        <id>Q13021</id>
    </interactant>
    <interactant intactId="EBI-2870359">
        <id>P22794</id>
        <label>EVI2A</label>
    </interactant>
    <organismsDiffer>false</organismsDiffer>
    <experiments>3</experiments>
</comment>
<comment type="interaction">
    <interactant intactId="EBI-750078">
        <id>Q13021</id>
    </interactant>
    <interactant intactId="EBI-2869867">
        <id>P12314</id>
        <label>FCGR1A</label>
    </interactant>
    <organismsDiffer>false</organismsDiffer>
    <experiments>3</experiments>
</comment>
<comment type="interaction">
    <interactant intactId="EBI-750078">
        <id>Q13021</id>
    </interactant>
    <interactant intactId="EBI-2833872">
        <id>O15552</id>
        <label>FFAR2</label>
    </interactant>
    <organismsDiffer>false</organismsDiffer>
    <experiments>3</experiments>
</comment>
<comment type="interaction">
    <interactant intactId="EBI-750078">
        <id>Q13021</id>
    </interactant>
    <interactant intactId="EBI-12142257">
        <id>Q8TBE3</id>
        <label>FNDC9</label>
    </interactant>
    <organismsDiffer>false</organismsDiffer>
    <experiments>3</experiments>
</comment>
<comment type="interaction">
    <interactant intactId="EBI-750078">
        <id>Q13021</id>
    </interactant>
    <interactant intactId="EBI-1058791">
        <id>Q9UJ14</id>
        <label>GGT7</label>
    </interactant>
    <organismsDiffer>false</organismsDiffer>
    <experiments>6</experiments>
</comment>
<comment type="interaction">
    <interactant intactId="EBI-750078">
        <id>Q13021</id>
    </interactant>
    <interactant intactId="EBI-17458373">
        <id>P48165</id>
        <label>GJA8</label>
    </interactant>
    <organismsDiffer>false</organismsDiffer>
    <experiments>3</experiments>
</comment>
<comment type="interaction">
    <interactant intactId="EBI-750078">
        <id>Q13021</id>
    </interactant>
    <interactant intactId="EBI-4289554">
        <id>Q99795</id>
        <label>GPA33</label>
    </interactant>
    <organismsDiffer>false</organismsDiffer>
    <experiments>3</experiments>
</comment>
<comment type="interaction">
    <interactant intactId="EBI-750078">
        <id>Q13021</id>
    </interactant>
    <interactant intactId="EBI-80490">
        <id>P16871</id>
        <label>IL7R</label>
    </interactant>
    <organismsDiffer>false</organismsDiffer>
    <experiments>3</experiments>
</comment>
<comment type="interaction">
    <interactant intactId="EBI-750078">
        <id>Q13021</id>
    </interactant>
    <interactant intactId="EBI-749265">
        <id>Q8N6L0</id>
        <label>KASH5</label>
    </interactant>
    <organismsDiffer>false</organismsDiffer>
    <experiments>3</experiments>
</comment>
<comment type="interaction">
    <interactant intactId="EBI-750078">
        <id>Q13021</id>
    </interactant>
    <interactant intactId="EBI-9018187">
        <id>P26715</id>
        <label>KLRC1</label>
    </interactant>
    <organismsDiffer>false</organismsDiffer>
    <experiments>3</experiments>
</comment>
<comment type="interaction">
    <interactant intactId="EBI-750078">
        <id>Q13021</id>
    </interactant>
    <interactant intactId="EBI-10173166">
        <id>Q5T700</id>
        <label>LDLRAD1</label>
    </interactant>
    <organismsDiffer>false</organismsDiffer>
    <experiments>7</experiments>
</comment>
<comment type="interaction">
    <interactant intactId="EBI-750078">
        <id>Q13021</id>
    </interactant>
    <interactant intactId="EBI-750776">
        <id>O95214</id>
        <label>LEPROTL1</label>
    </interactant>
    <organismsDiffer>false</organismsDiffer>
    <experiments>3</experiments>
</comment>
<comment type="interaction">
    <interactant intactId="EBI-750078">
        <id>Q13021</id>
    </interactant>
    <interactant intactId="EBI-3867271">
        <id>Q9NQG1</id>
        <label>MANBAL</label>
    </interactant>
    <organismsDiffer>false</organismsDiffer>
    <experiments>3</experiments>
</comment>
<comment type="interaction">
    <interactant intactId="EBI-750078">
        <id>Q13021</id>
    </interactant>
    <interactant intactId="EBI-2816356">
        <id>Q8IX19</id>
        <label>MCEMP1</label>
    </interactant>
    <organismsDiffer>false</organismsDiffer>
    <experiments>3</experiments>
</comment>
<comment type="interaction">
    <interactant intactId="EBI-750078">
        <id>Q13021</id>
    </interactant>
    <interactant intactId="EBI-10227644">
        <id>Q9NXJ0</id>
        <label>MS4A12</label>
    </interactant>
    <organismsDiffer>false</organismsDiffer>
    <experiments>6</experiments>
</comment>
<comment type="interaction">
    <interactant intactId="EBI-750078">
        <id>Q13021</id>
    </interactant>
    <interactant intactId="EBI-1776976">
        <id>P21757</id>
        <label>MSR1</label>
    </interactant>
    <organismsDiffer>false</organismsDiffer>
    <experiments>6</experiments>
</comment>
<comment type="interaction">
    <interactant intactId="EBI-750078">
        <id>Q13021</id>
    </interactant>
    <interactant intactId="EBI-17263240">
        <id>P15941-11</id>
        <label>MUC1</label>
    </interactant>
    <organismsDiffer>false</organismsDiffer>
    <experiments>3</experiments>
</comment>
<comment type="interaction">
    <interactant intactId="EBI-750078">
        <id>Q13021</id>
    </interactant>
    <interactant intactId="EBI-12807478">
        <id>P35372-10</id>
        <label>OPRM1</label>
    </interactant>
    <organismsDiffer>false</organismsDiffer>
    <experiments>3</experiments>
</comment>
<comment type="interaction">
    <interactant intactId="EBI-750078">
        <id>Q13021</id>
    </interactant>
    <interactant intactId="EBI-1050125">
        <id>O15173</id>
        <label>PGRMC2</label>
    </interactant>
    <organismsDiffer>false</organismsDiffer>
    <experiments>3</experiments>
</comment>
<comment type="interaction">
    <interactant intactId="EBI-750078">
        <id>Q13021</id>
    </interactant>
    <interactant intactId="EBI-13380620">
        <id>Q9NZK7</id>
        <label>PLA2G2E</label>
    </interactant>
    <organismsDiffer>false</organismsDiffer>
    <experiments>3</experiments>
</comment>
<comment type="interaction">
    <interactant intactId="EBI-750078">
        <id>Q13021</id>
    </interactant>
    <interactant intactId="EBI-10192441">
        <id>Q86VR2</id>
        <label>RETREG3</label>
    </interactant>
    <organismsDiffer>false</organismsDiffer>
    <experiments>3</experiments>
</comment>
<comment type="interaction">
    <interactant intactId="EBI-750078">
        <id>Q13021</id>
    </interactant>
    <interactant intactId="EBI-2340249">
        <id>Q96GF1</id>
        <label>RNF185</label>
    </interactant>
    <organismsDiffer>false</organismsDiffer>
    <experiments>3</experiments>
</comment>
<comment type="interaction">
    <interactant intactId="EBI-750078">
        <id>Q13021</id>
    </interactant>
    <interactant intactId="EBI-12161783">
        <id>O43699-3</id>
        <label>SIGLEC6</label>
    </interactant>
    <organismsDiffer>false</organismsDiffer>
    <experiments>3</experiments>
</comment>
<comment type="interaction">
    <interactant intactId="EBI-750078">
        <id>Q13021</id>
    </interactant>
    <interactant intactId="EBI-6977215">
        <id>Q9Y3P8</id>
        <label>SIT1</label>
    </interactant>
    <organismsDiffer>false</organismsDiffer>
    <experiments>3</experiments>
</comment>
<comment type="interaction">
    <interactant intactId="EBI-750078">
        <id>Q13021</id>
    </interactant>
    <interactant intactId="EBI-3923031">
        <id>Q14973</id>
        <label>SLC10A1</label>
    </interactant>
    <organismsDiffer>false</organismsDiffer>
    <experiments>3</experiments>
</comment>
<comment type="interaction">
    <interactant intactId="EBI-750078">
        <id>Q13021</id>
    </interactant>
    <interactant intactId="EBI-18159983">
        <id>Q3KNW5</id>
        <label>SLC10A6</label>
    </interactant>
    <organismsDiffer>false</organismsDiffer>
    <experiments>3</experiments>
</comment>
<comment type="interaction">
    <interactant intactId="EBI-750078">
        <id>Q13021</id>
    </interactant>
    <interactant intactId="EBI-17595455">
        <id>P54219-3</id>
        <label>SLC18A1</label>
    </interactant>
    <organismsDiffer>false</organismsDiffer>
    <experiments>3</experiments>
</comment>
<comment type="interaction">
    <interactant intactId="EBI-750078">
        <id>Q13021</id>
    </interactant>
    <interactant intactId="EBI-17295964">
        <id>Q9NQQ7-3</id>
        <label>SLC35C2</label>
    </interactant>
    <organismsDiffer>false</organismsDiffer>
    <experiments>3</experiments>
</comment>
<comment type="interaction">
    <interactant intactId="EBI-750078">
        <id>Q13021</id>
    </interactant>
    <interactant intactId="EBI-20117546">
        <id>Q9H169-2</id>
        <label>STMN4</label>
    </interactant>
    <organismsDiffer>false</organismsDiffer>
    <experiments>3</experiments>
</comment>
<comment type="interaction">
    <interactant intactId="EBI-750078">
        <id>Q13021</id>
    </interactant>
    <interactant intactId="EBI-712466">
        <id>Q16623</id>
        <label>STX1A</label>
    </interactant>
    <organismsDiffer>false</organismsDiffer>
    <experiments>3</experiments>
</comment>
<comment type="interaction">
    <interactant intactId="EBI-750078">
        <id>Q13021</id>
    </interactant>
    <interactant intactId="EBI-7131783">
        <id>Q8N205</id>
        <label>SYNE4</label>
    </interactant>
    <organismsDiffer>false</organismsDiffer>
    <experiments>3</experiments>
</comment>
<comment type="interaction">
    <interactant intactId="EBI-750078">
        <id>Q13021</id>
    </interactant>
    <interactant intactId="EBI-12099160">
        <id>Q8N205-2</id>
        <label>SYNE4</label>
    </interactant>
    <organismsDiffer>false</organismsDiffer>
    <experiments>3</experiments>
</comment>
<comment type="interaction">
    <interactant intactId="EBI-750078">
        <id>Q13021</id>
    </interactant>
    <interactant intactId="EBI-8032987">
        <id>Q8N9I0</id>
        <label>SYT2</label>
    </interactant>
    <organismsDiffer>false</organismsDiffer>
    <experiments>3</experiments>
</comment>
<comment type="interaction">
    <interactant intactId="EBI-750078">
        <id>Q13021</id>
    </interactant>
    <interactant intactId="EBI-7238458">
        <id>Q8IV31</id>
        <label>TMEM139</label>
    </interactant>
    <organismsDiffer>false</organismsDiffer>
    <experiments>3</experiments>
</comment>
<comment type="interaction">
    <interactant intactId="EBI-750078">
        <id>Q13021</id>
    </interactant>
    <interactant intactId="EBI-10255122">
        <id>Q6ZP80</id>
        <label>TMEM182</label>
    </interactant>
    <organismsDiffer>false</organismsDiffer>
    <experiments>3</experiments>
</comment>
<comment type="interaction">
    <interactant intactId="EBI-750078">
        <id>Q13021</id>
    </interactant>
    <interactant intactId="EBI-10314986">
        <id>Q9NWD8</id>
        <label>TMEM248</label>
    </interactant>
    <organismsDiffer>false</organismsDiffer>
    <experiments>3</experiments>
</comment>
<comment type="interaction">
    <interactant intactId="EBI-750078">
        <id>Q13021</id>
    </interactant>
    <interactant intactId="EBI-11742770">
        <id>Q96HE8</id>
        <label>TMEM80</label>
    </interactant>
    <organismsDiffer>false</organismsDiffer>
    <experiments>3</experiments>
</comment>
<comment type="interaction">
    <interactant intactId="EBI-750078">
        <id>Q13021</id>
    </interactant>
    <interactant intactId="EBI-6447886">
        <id>Q9Y320</id>
        <label>TMX2</label>
    </interactant>
    <organismsDiffer>false</organismsDiffer>
    <experiments>3</experiments>
</comment>
<comment type="interaction">
    <interactant intactId="EBI-750078">
        <id>Q13021</id>
    </interactant>
    <interactant intactId="EBI-10180829">
        <id>Q7KZS0</id>
        <label>UBE2I</label>
    </interactant>
    <organismsDiffer>false</organismsDiffer>
    <experiments>3</experiments>
</comment>
<comment type="interaction">
    <interactant intactId="EBI-750078">
        <id>Q13021</id>
    </interactant>
    <interactant intactId="EBI-17458299">
        <id>P21754-3</id>
        <label>ZP3</label>
    </interactant>
    <organismsDiffer>false</organismsDiffer>
    <experiments>3</experiments>
</comment>
<comment type="subcellular location">
    <subcellularLocation>
        <location evidence="3">Membrane</location>
        <topology evidence="3">Multi-pass membrane protein</topology>
    </subcellularLocation>
</comment>
<comment type="similarity">
    <text evidence="3">Belongs to the MAL family.</text>
</comment>
<evidence type="ECO:0000255" key="1"/>
<evidence type="ECO:0000255" key="2">
    <source>
        <dbReference type="PROSITE-ProRule" id="PRU00581"/>
    </source>
</evidence>
<evidence type="ECO:0000305" key="3"/>
<protein>
    <recommendedName>
        <fullName>MAL-like protein</fullName>
    </recommendedName>
    <alternativeName>
        <fullName>Protein BENE</fullName>
    </alternativeName>
</protein>
<dbReference type="EMBL" id="AK125647">
    <property type="protein sequence ID" value="BAG54228.1"/>
    <property type="molecule type" value="mRNA"/>
</dbReference>
<dbReference type="EMBL" id="CH878608">
    <property type="protein sequence ID" value="EAW50639.1"/>
    <property type="molecule type" value="Genomic_DNA"/>
</dbReference>
<dbReference type="EMBL" id="BC003179">
    <property type="protein sequence ID" value="AAH03179.1"/>
    <property type="molecule type" value="mRNA"/>
</dbReference>
<dbReference type="EMBL" id="U17077">
    <property type="protein sequence ID" value="AAA76738.1"/>
    <property type="molecule type" value="mRNA"/>
</dbReference>
<dbReference type="CCDS" id="CCDS2085.1"/>
<dbReference type="PIR" id="I38891">
    <property type="entry name" value="I38891"/>
</dbReference>
<dbReference type="RefSeq" id="NP_005425.1">
    <property type="nucleotide sequence ID" value="NM_005434.5"/>
</dbReference>
<dbReference type="SMR" id="Q13021"/>
<dbReference type="BioGRID" id="113606">
    <property type="interactions" value="151"/>
</dbReference>
<dbReference type="FunCoup" id="Q13021">
    <property type="interactions" value="153"/>
</dbReference>
<dbReference type="IntAct" id="Q13021">
    <property type="interactions" value="146"/>
</dbReference>
<dbReference type="STRING" id="9606.ENSP00000272462"/>
<dbReference type="iPTMnet" id="Q13021"/>
<dbReference type="PhosphoSitePlus" id="Q13021"/>
<dbReference type="BioMuta" id="MALL"/>
<dbReference type="DMDM" id="21264403"/>
<dbReference type="MassIVE" id="Q13021"/>
<dbReference type="PaxDb" id="9606-ENSP00000272462"/>
<dbReference type="PeptideAtlas" id="Q13021"/>
<dbReference type="ProteomicsDB" id="59108"/>
<dbReference type="Antibodypedia" id="54954">
    <property type="antibodies" value="5 antibodies from 5 providers"/>
</dbReference>
<dbReference type="DNASU" id="7851"/>
<dbReference type="Ensembl" id="ENST00000272462.3">
    <property type="protein sequence ID" value="ENSP00000272462.2"/>
    <property type="gene ID" value="ENSG00000144063.4"/>
</dbReference>
<dbReference type="GeneID" id="7851"/>
<dbReference type="KEGG" id="hsa:7851"/>
<dbReference type="MANE-Select" id="ENST00000272462.3">
    <property type="protein sequence ID" value="ENSP00000272462.2"/>
    <property type="RefSeq nucleotide sequence ID" value="NM_005434.5"/>
    <property type="RefSeq protein sequence ID" value="NP_005425.1"/>
</dbReference>
<dbReference type="UCSC" id="uc002tfk.3">
    <property type="organism name" value="human"/>
</dbReference>
<dbReference type="AGR" id="HGNC:6818"/>
<dbReference type="CTD" id="7851"/>
<dbReference type="DisGeNET" id="7851"/>
<dbReference type="GeneCards" id="MALL"/>
<dbReference type="HGNC" id="HGNC:6818">
    <property type="gene designation" value="MALL"/>
</dbReference>
<dbReference type="HPA" id="ENSG00000144063">
    <property type="expression patterns" value="Tissue enhanced (esophagus, intestine)"/>
</dbReference>
<dbReference type="MalaCards" id="MALL"/>
<dbReference type="MIM" id="602022">
    <property type="type" value="gene"/>
</dbReference>
<dbReference type="neXtProt" id="NX_Q13021"/>
<dbReference type="OpenTargets" id="ENSG00000144063"/>
<dbReference type="PharmGKB" id="PA30567"/>
<dbReference type="VEuPathDB" id="HostDB:ENSG00000144063"/>
<dbReference type="eggNOG" id="ENOG502S02H">
    <property type="taxonomic scope" value="Eukaryota"/>
</dbReference>
<dbReference type="GeneTree" id="ENSGT00940000161444"/>
<dbReference type="HOGENOM" id="CLU_112950_1_0_1"/>
<dbReference type="InParanoid" id="Q13021"/>
<dbReference type="OMA" id="FWVWVLV"/>
<dbReference type="OrthoDB" id="9885621at2759"/>
<dbReference type="PAN-GO" id="Q13021">
    <property type="GO annotations" value="3 GO annotations based on evolutionary models"/>
</dbReference>
<dbReference type="PhylomeDB" id="Q13021"/>
<dbReference type="TreeFam" id="TF316174"/>
<dbReference type="PathwayCommons" id="Q13021"/>
<dbReference type="SignaLink" id="Q13021"/>
<dbReference type="BioGRID-ORCS" id="7851">
    <property type="hits" value="33 hits in 1127 CRISPR screens"/>
</dbReference>
<dbReference type="ChiTaRS" id="MALL">
    <property type="organism name" value="human"/>
</dbReference>
<dbReference type="GeneWiki" id="MALL"/>
<dbReference type="GenomeRNAi" id="7851"/>
<dbReference type="Pharos" id="Q13021">
    <property type="development level" value="Tdark"/>
</dbReference>
<dbReference type="PRO" id="PR:Q13021"/>
<dbReference type="Proteomes" id="UP000005640">
    <property type="component" value="Chromosome 2"/>
</dbReference>
<dbReference type="RNAct" id="Q13021">
    <property type="molecule type" value="protein"/>
</dbReference>
<dbReference type="Bgee" id="ENSG00000144063">
    <property type="expression patterns" value="Expressed in lower esophagus mucosa and 99 other cell types or tissues"/>
</dbReference>
<dbReference type="ExpressionAtlas" id="Q13021">
    <property type="expression patterns" value="baseline and differential"/>
</dbReference>
<dbReference type="GO" id="GO:0030136">
    <property type="term" value="C:clathrin-coated vesicle"/>
    <property type="evidence" value="ECO:0000314"/>
    <property type="project" value="HGNC-UCL"/>
</dbReference>
<dbReference type="GO" id="GO:0031410">
    <property type="term" value="C:cytoplasmic vesicle"/>
    <property type="evidence" value="ECO:0000314"/>
    <property type="project" value="HGNC-UCL"/>
</dbReference>
<dbReference type="GO" id="GO:0000139">
    <property type="term" value="C:Golgi membrane"/>
    <property type="evidence" value="ECO:0000314"/>
    <property type="project" value="HGNC-UCL"/>
</dbReference>
<dbReference type="GO" id="GO:0016020">
    <property type="term" value="C:membrane"/>
    <property type="evidence" value="ECO:0000318"/>
    <property type="project" value="GO_Central"/>
</dbReference>
<dbReference type="GO" id="GO:0045121">
    <property type="term" value="C:membrane raft"/>
    <property type="evidence" value="ECO:0000314"/>
    <property type="project" value="HGNC-UCL"/>
</dbReference>
<dbReference type="GO" id="GO:0005886">
    <property type="term" value="C:plasma membrane"/>
    <property type="evidence" value="ECO:0000314"/>
    <property type="project" value="HGNC-UCL"/>
</dbReference>
<dbReference type="GO" id="GO:0019911">
    <property type="term" value="F:structural constituent of myelin sheath"/>
    <property type="evidence" value="ECO:0000318"/>
    <property type="project" value="GO_Central"/>
</dbReference>
<dbReference type="GO" id="GO:0042632">
    <property type="term" value="P:cholesterol homeostasis"/>
    <property type="evidence" value="ECO:0000303"/>
    <property type="project" value="HGNC-UCL"/>
</dbReference>
<dbReference type="GO" id="GO:0042552">
    <property type="term" value="P:myelination"/>
    <property type="evidence" value="ECO:0000318"/>
    <property type="project" value="GO_Central"/>
</dbReference>
<dbReference type="InterPro" id="IPR013295">
    <property type="entry name" value="MAL"/>
</dbReference>
<dbReference type="InterPro" id="IPR008253">
    <property type="entry name" value="Marvel"/>
</dbReference>
<dbReference type="InterPro" id="IPR050578">
    <property type="entry name" value="MARVEL-CKLF_proteins"/>
</dbReference>
<dbReference type="PANTHER" id="PTHR22776:SF24">
    <property type="entry name" value="MAL-LIKE PROTEIN"/>
    <property type="match status" value="1"/>
</dbReference>
<dbReference type="PANTHER" id="PTHR22776">
    <property type="entry name" value="MARVEL-CONTAINING POTENTIAL LIPID RAFT-ASSOCIATED PROTEIN"/>
    <property type="match status" value="1"/>
</dbReference>
<dbReference type="Pfam" id="PF01284">
    <property type="entry name" value="MARVEL"/>
    <property type="match status" value="1"/>
</dbReference>
<dbReference type="PRINTS" id="PR01884">
    <property type="entry name" value="MALPROTEIN"/>
</dbReference>
<dbReference type="PROSITE" id="PS51225">
    <property type="entry name" value="MARVEL"/>
    <property type="match status" value="1"/>
</dbReference>
<reference key="1">
    <citation type="journal article" date="2004" name="Nat. Genet.">
        <title>Complete sequencing and characterization of 21,243 full-length human cDNAs.</title>
        <authorList>
            <person name="Ota T."/>
            <person name="Suzuki Y."/>
            <person name="Nishikawa T."/>
            <person name="Otsuki T."/>
            <person name="Sugiyama T."/>
            <person name="Irie R."/>
            <person name="Wakamatsu A."/>
            <person name="Hayashi K."/>
            <person name="Sato H."/>
            <person name="Nagai K."/>
            <person name="Kimura K."/>
            <person name="Makita H."/>
            <person name="Sekine M."/>
            <person name="Obayashi M."/>
            <person name="Nishi T."/>
            <person name="Shibahara T."/>
            <person name="Tanaka T."/>
            <person name="Ishii S."/>
            <person name="Yamamoto J."/>
            <person name="Saito K."/>
            <person name="Kawai Y."/>
            <person name="Isono Y."/>
            <person name="Nakamura Y."/>
            <person name="Nagahari K."/>
            <person name="Murakami K."/>
            <person name="Yasuda T."/>
            <person name="Iwayanagi T."/>
            <person name="Wagatsuma M."/>
            <person name="Shiratori A."/>
            <person name="Sudo H."/>
            <person name="Hosoiri T."/>
            <person name="Kaku Y."/>
            <person name="Kodaira H."/>
            <person name="Kondo H."/>
            <person name="Sugawara M."/>
            <person name="Takahashi M."/>
            <person name="Kanda K."/>
            <person name="Yokoi T."/>
            <person name="Furuya T."/>
            <person name="Kikkawa E."/>
            <person name="Omura Y."/>
            <person name="Abe K."/>
            <person name="Kamihara K."/>
            <person name="Katsuta N."/>
            <person name="Sato K."/>
            <person name="Tanikawa M."/>
            <person name="Yamazaki M."/>
            <person name="Ninomiya K."/>
            <person name="Ishibashi T."/>
            <person name="Yamashita H."/>
            <person name="Murakawa K."/>
            <person name="Fujimori K."/>
            <person name="Tanai H."/>
            <person name="Kimata M."/>
            <person name="Watanabe M."/>
            <person name="Hiraoka S."/>
            <person name="Chiba Y."/>
            <person name="Ishida S."/>
            <person name="Ono Y."/>
            <person name="Takiguchi S."/>
            <person name="Watanabe S."/>
            <person name="Yosida M."/>
            <person name="Hotuta T."/>
            <person name="Kusano J."/>
            <person name="Kanehori K."/>
            <person name="Takahashi-Fujii A."/>
            <person name="Hara H."/>
            <person name="Tanase T.-O."/>
            <person name="Nomura Y."/>
            <person name="Togiya S."/>
            <person name="Komai F."/>
            <person name="Hara R."/>
            <person name="Takeuchi K."/>
            <person name="Arita M."/>
            <person name="Imose N."/>
            <person name="Musashino K."/>
            <person name="Yuuki H."/>
            <person name="Oshima A."/>
            <person name="Sasaki N."/>
            <person name="Aotsuka S."/>
            <person name="Yoshikawa Y."/>
            <person name="Matsunawa H."/>
            <person name="Ichihara T."/>
            <person name="Shiohata N."/>
            <person name="Sano S."/>
            <person name="Moriya S."/>
            <person name="Momiyama H."/>
            <person name="Satoh N."/>
            <person name="Takami S."/>
            <person name="Terashima Y."/>
            <person name="Suzuki O."/>
            <person name="Nakagawa S."/>
            <person name="Senoh A."/>
            <person name="Mizoguchi H."/>
            <person name="Goto Y."/>
            <person name="Shimizu F."/>
            <person name="Wakebe H."/>
            <person name="Hishigaki H."/>
            <person name="Watanabe T."/>
            <person name="Sugiyama A."/>
            <person name="Takemoto M."/>
            <person name="Kawakami B."/>
            <person name="Yamazaki M."/>
            <person name="Watanabe K."/>
            <person name="Kumagai A."/>
            <person name="Itakura S."/>
            <person name="Fukuzumi Y."/>
            <person name="Fujimori Y."/>
            <person name="Komiyama M."/>
            <person name="Tashiro H."/>
            <person name="Tanigami A."/>
            <person name="Fujiwara T."/>
            <person name="Ono T."/>
            <person name="Yamada K."/>
            <person name="Fujii Y."/>
            <person name="Ozaki K."/>
            <person name="Hirao M."/>
            <person name="Ohmori Y."/>
            <person name="Kawabata A."/>
            <person name="Hikiji T."/>
            <person name="Kobatake N."/>
            <person name="Inagaki H."/>
            <person name="Ikema Y."/>
            <person name="Okamoto S."/>
            <person name="Okitani R."/>
            <person name="Kawakami T."/>
            <person name="Noguchi S."/>
            <person name="Itoh T."/>
            <person name="Shigeta K."/>
            <person name="Senba T."/>
            <person name="Matsumura K."/>
            <person name="Nakajima Y."/>
            <person name="Mizuno T."/>
            <person name="Morinaga M."/>
            <person name="Sasaki M."/>
            <person name="Togashi T."/>
            <person name="Oyama M."/>
            <person name="Hata H."/>
            <person name="Watanabe M."/>
            <person name="Komatsu T."/>
            <person name="Mizushima-Sugano J."/>
            <person name="Satoh T."/>
            <person name="Shirai Y."/>
            <person name="Takahashi Y."/>
            <person name="Nakagawa K."/>
            <person name="Okumura K."/>
            <person name="Nagase T."/>
            <person name="Nomura N."/>
            <person name="Kikuchi H."/>
            <person name="Masuho Y."/>
            <person name="Yamashita R."/>
            <person name="Nakai K."/>
            <person name="Yada T."/>
            <person name="Nakamura Y."/>
            <person name="Ohara O."/>
            <person name="Isogai T."/>
            <person name="Sugano S."/>
        </authorList>
    </citation>
    <scope>NUCLEOTIDE SEQUENCE [LARGE SCALE MRNA]</scope>
    <source>
        <tissue>Synovium</tissue>
    </source>
</reference>
<reference key="2">
    <citation type="submission" date="2005-07" db="EMBL/GenBank/DDBJ databases">
        <authorList>
            <person name="Mural R.J."/>
            <person name="Istrail S."/>
            <person name="Sutton G.G."/>
            <person name="Florea L."/>
            <person name="Halpern A.L."/>
            <person name="Mobarry C.M."/>
            <person name="Lippert R."/>
            <person name="Walenz B."/>
            <person name="Shatkay H."/>
            <person name="Dew I."/>
            <person name="Miller J.R."/>
            <person name="Flanigan M.J."/>
            <person name="Edwards N.J."/>
            <person name="Bolanos R."/>
            <person name="Fasulo D."/>
            <person name="Halldorsson B.V."/>
            <person name="Hannenhalli S."/>
            <person name="Turner R."/>
            <person name="Yooseph S."/>
            <person name="Lu F."/>
            <person name="Nusskern D.R."/>
            <person name="Shue B.C."/>
            <person name="Zheng X.H."/>
            <person name="Zhong F."/>
            <person name="Delcher A.L."/>
            <person name="Huson D.H."/>
            <person name="Kravitz S.A."/>
            <person name="Mouchard L."/>
            <person name="Reinert K."/>
            <person name="Remington K.A."/>
            <person name="Clark A.G."/>
            <person name="Waterman M.S."/>
            <person name="Eichler E.E."/>
            <person name="Adams M.D."/>
            <person name="Hunkapiller M.W."/>
            <person name="Myers E.W."/>
            <person name="Venter J.C."/>
        </authorList>
    </citation>
    <scope>NUCLEOTIDE SEQUENCE [LARGE SCALE GENOMIC DNA]</scope>
</reference>
<reference key="3">
    <citation type="journal article" date="2004" name="Genome Res.">
        <title>The status, quality, and expansion of the NIH full-length cDNA project: the Mammalian Gene Collection (MGC).</title>
        <authorList>
            <consortium name="The MGC Project Team"/>
        </authorList>
    </citation>
    <scope>NUCLEOTIDE SEQUENCE [LARGE SCALE MRNA]</scope>
    <source>
        <tissue>Kidney</tissue>
    </source>
</reference>
<reference key="4">
    <citation type="journal article" date="1995" name="Gene">
        <title>Searching for non-V kappa transcripts from the human immunoglobulin kappa locus.</title>
        <authorList>
            <person name="Lautner-Rieske A."/>
            <person name="Thiebe R."/>
            <person name="Zachau H.G."/>
        </authorList>
    </citation>
    <scope>NUCLEOTIDE SEQUENCE [MRNA] OF 6-153</scope>
</reference>
<sequence>MASPDPPATSYAPSDVPSGVALFLTIPFAFFLPELIFGFLVWTMVAATHIVYPLLQGWVMYVSLTSFLISLMFLLSYLFGFYKRFESWRVLDSLYHGTTGILYMSAAVLQVHATIVSEKLLDPRIYYINSAASFFAFIATLLYILHAFSIYYH</sequence>